<reference key="1">
    <citation type="journal article" date="1996" name="Plant J.">
        <title>The Arabidopsis XET-related gene family: environmental and hormonal regulation of expression.</title>
        <authorList>
            <person name="Xu W."/>
            <person name="Campbell P."/>
            <person name="Vargheese A.K."/>
            <person name="Braam J."/>
        </authorList>
    </citation>
    <scope>NUCLEOTIDE SEQUENCE [MRNA]</scope>
    <source>
        <strain>cv. Columbia</strain>
    </source>
</reference>
<reference key="2">
    <citation type="journal article" date="1998" name="Nature">
        <title>Analysis of 1.9 Mb of contiguous sequence from chromosome 4 of Arabidopsis thaliana.</title>
        <authorList>
            <person name="Bevan M."/>
            <person name="Bancroft I."/>
            <person name="Bent E."/>
            <person name="Love K."/>
            <person name="Goodman H.M."/>
            <person name="Dean C."/>
            <person name="Bergkamp R."/>
            <person name="Dirkse W."/>
            <person name="van Staveren M."/>
            <person name="Stiekema W."/>
            <person name="Drost L."/>
            <person name="Ridley P."/>
            <person name="Hudson S.-A."/>
            <person name="Patel K."/>
            <person name="Murphy G."/>
            <person name="Piffanelli P."/>
            <person name="Wedler H."/>
            <person name="Wedler E."/>
            <person name="Wambutt R."/>
            <person name="Weitzenegger T."/>
            <person name="Pohl T."/>
            <person name="Terryn N."/>
            <person name="Gielen J."/>
            <person name="Villarroel R."/>
            <person name="De Clercq R."/>
            <person name="van Montagu M."/>
            <person name="Lecharny A."/>
            <person name="Aubourg S."/>
            <person name="Gy I."/>
            <person name="Kreis M."/>
            <person name="Lao N."/>
            <person name="Kavanagh T."/>
            <person name="Hempel S."/>
            <person name="Kotter P."/>
            <person name="Entian K.-D."/>
            <person name="Rieger M."/>
            <person name="Schaefer M."/>
            <person name="Funk B."/>
            <person name="Mueller-Auer S."/>
            <person name="Silvey M."/>
            <person name="James R."/>
            <person name="Monfort A."/>
            <person name="Pons A."/>
            <person name="Puigdomenech P."/>
            <person name="Douka A."/>
            <person name="Voukelatou E."/>
            <person name="Milioni D."/>
            <person name="Hatzopoulos P."/>
            <person name="Piravandi E."/>
            <person name="Obermaier B."/>
            <person name="Hilbert H."/>
            <person name="Duesterhoeft A."/>
            <person name="Moores T."/>
            <person name="Jones J.D.G."/>
            <person name="Eneva T."/>
            <person name="Palme K."/>
            <person name="Benes V."/>
            <person name="Rechmann S."/>
            <person name="Ansorge W."/>
            <person name="Cooke R."/>
            <person name="Berger C."/>
            <person name="Delseny M."/>
            <person name="Voet M."/>
            <person name="Volckaert G."/>
            <person name="Mewes H.-W."/>
            <person name="Klosterman S."/>
            <person name="Schueller C."/>
            <person name="Chalwatzis N."/>
        </authorList>
    </citation>
    <scope>NUCLEOTIDE SEQUENCE [LARGE SCALE GENOMIC DNA]</scope>
    <source>
        <strain>cv. Columbia</strain>
    </source>
</reference>
<reference key="3">
    <citation type="journal article" date="1999" name="Nature">
        <title>Sequence and analysis of chromosome 4 of the plant Arabidopsis thaliana.</title>
        <authorList>
            <person name="Mayer K.F.X."/>
            <person name="Schueller C."/>
            <person name="Wambutt R."/>
            <person name="Murphy G."/>
            <person name="Volckaert G."/>
            <person name="Pohl T."/>
            <person name="Duesterhoeft A."/>
            <person name="Stiekema W."/>
            <person name="Entian K.-D."/>
            <person name="Terryn N."/>
            <person name="Harris B."/>
            <person name="Ansorge W."/>
            <person name="Brandt P."/>
            <person name="Grivell L.A."/>
            <person name="Rieger M."/>
            <person name="Weichselgartner M."/>
            <person name="de Simone V."/>
            <person name="Obermaier B."/>
            <person name="Mache R."/>
            <person name="Mueller M."/>
            <person name="Kreis M."/>
            <person name="Delseny M."/>
            <person name="Puigdomenech P."/>
            <person name="Watson M."/>
            <person name="Schmidtheini T."/>
            <person name="Reichert B."/>
            <person name="Portetelle D."/>
            <person name="Perez-Alonso M."/>
            <person name="Boutry M."/>
            <person name="Bancroft I."/>
            <person name="Vos P."/>
            <person name="Hoheisel J."/>
            <person name="Zimmermann W."/>
            <person name="Wedler H."/>
            <person name="Ridley P."/>
            <person name="Langham S.-A."/>
            <person name="McCullagh B."/>
            <person name="Bilham L."/>
            <person name="Robben J."/>
            <person name="van der Schueren J."/>
            <person name="Grymonprez B."/>
            <person name="Chuang Y.-J."/>
            <person name="Vandenbussche F."/>
            <person name="Braeken M."/>
            <person name="Weltjens I."/>
            <person name="Voet M."/>
            <person name="Bastiaens I."/>
            <person name="Aert R."/>
            <person name="Defoor E."/>
            <person name="Weitzenegger T."/>
            <person name="Bothe G."/>
            <person name="Ramsperger U."/>
            <person name="Hilbert H."/>
            <person name="Braun M."/>
            <person name="Holzer E."/>
            <person name="Brandt A."/>
            <person name="Peters S."/>
            <person name="van Staveren M."/>
            <person name="Dirkse W."/>
            <person name="Mooijman P."/>
            <person name="Klein Lankhorst R."/>
            <person name="Rose M."/>
            <person name="Hauf J."/>
            <person name="Koetter P."/>
            <person name="Berneiser S."/>
            <person name="Hempel S."/>
            <person name="Feldpausch M."/>
            <person name="Lamberth S."/>
            <person name="Van den Daele H."/>
            <person name="De Keyser A."/>
            <person name="Buysshaert C."/>
            <person name="Gielen J."/>
            <person name="Villarroel R."/>
            <person name="De Clercq R."/>
            <person name="van Montagu M."/>
            <person name="Rogers J."/>
            <person name="Cronin A."/>
            <person name="Quail M.A."/>
            <person name="Bray-Allen S."/>
            <person name="Clark L."/>
            <person name="Doggett J."/>
            <person name="Hall S."/>
            <person name="Kay M."/>
            <person name="Lennard N."/>
            <person name="McLay K."/>
            <person name="Mayes R."/>
            <person name="Pettett A."/>
            <person name="Rajandream M.A."/>
            <person name="Lyne M."/>
            <person name="Benes V."/>
            <person name="Rechmann S."/>
            <person name="Borkova D."/>
            <person name="Bloecker H."/>
            <person name="Scharfe M."/>
            <person name="Grimm M."/>
            <person name="Loehnert T.-H."/>
            <person name="Dose S."/>
            <person name="de Haan M."/>
            <person name="Maarse A.C."/>
            <person name="Schaefer M."/>
            <person name="Mueller-Auer S."/>
            <person name="Gabel C."/>
            <person name="Fuchs M."/>
            <person name="Fartmann B."/>
            <person name="Granderath K."/>
            <person name="Dauner D."/>
            <person name="Herzl A."/>
            <person name="Neumann S."/>
            <person name="Argiriou A."/>
            <person name="Vitale D."/>
            <person name="Liguori R."/>
            <person name="Piravandi E."/>
            <person name="Massenet O."/>
            <person name="Quigley F."/>
            <person name="Clabauld G."/>
            <person name="Muendlein A."/>
            <person name="Felber R."/>
            <person name="Schnabl S."/>
            <person name="Hiller R."/>
            <person name="Schmidt W."/>
            <person name="Lecharny A."/>
            <person name="Aubourg S."/>
            <person name="Chefdor F."/>
            <person name="Cooke R."/>
            <person name="Berger C."/>
            <person name="Monfort A."/>
            <person name="Casacuberta E."/>
            <person name="Gibbons T."/>
            <person name="Weber N."/>
            <person name="Vandenbol M."/>
            <person name="Bargues M."/>
            <person name="Terol J."/>
            <person name="Torres A."/>
            <person name="Perez-Perez A."/>
            <person name="Purnelle B."/>
            <person name="Bent E."/>
            <person name="Johnson S."/>
            <person name="Tacon D."/>
            <person name="Jesse T."/>
            <person name="Heijnen L."/>
            <person name="Schwarz S."/>
            <person name="Scholler P."/>
            <person name="Heber S."/>
            <person name="Francs P."/>
            <person name="Bielke C."/>
            <person name="Frishman D."/>
            <person name="Haase D."/>
            <person name="Lemcke K."/>
            <person name="Mewes H.-W."/>
            <person name="Stocker S."/>
            <person name="Zaccaria P."/>
            <person name="Bevan M."/>
            <person name="Wilson R.K."/>
            <person name="de la Bastide M."/>
            <person name="Habermann K."/>
            <person name="Parnell L."/>
            <person name="Dedhia N."/>
            <person name="Gnoj L."/>
            <person name="Schutz K."/>
            <person name="Huang E."/>
            <person name="Spiegel L."/>
            <person name="Sekhon M."/>
            <person name="Murray J."/>
            <person name="Sheet P."/>
            <person name="Cordes M."/>
            <person name="Abu-Threideh J."/>
            <person name="Stoneking T."/>
            <person name="Kalicki J."/>
            <person name="Graves T."/>
            <person name="Harmon G."/>
            <person name="Edwards J."/>
            <person name="Latreille P."/>
            <person name="Courtney L."/>
            <person name="Cloud J."/>
            <person name="Abbott A."/>
            <person name="Scott K."/>
            <person name="Johnson D."/>
            <person name="Minx P."/>
            <person name="Bentley D."/>
            <person name="Fulton B."/>
            <person name="Miller N."/>
            <person name="Greco T."/>
            <person name="Kemp K."/>
            <person name="Kramer J."/>
            <person name="Fulton L."/>
            <person name="Mardis E."/>
            <person name="Dante M."/>
            <person name="Pepin K."/>
            <person name="Hillier L.W."/>
            <person name="Nelson J."/>
            <person name="Spieth J."/>
            <person name="Ryan E."/>
            <person name="Andrews S."/>
            <person name="Geisel C."/>
            <person name="Layman D."/>
            <person name="Du H."/>
            <person name="Ali J."/>
            <person name="Berghoff A."/>
            <person name="Jones K."/>
            <person name="Drone K."/>
            <person name="Cotton M."/>
            <person name="Joshu C."/>
            <person name="Antonoiu B."/>
            <person name="Zidanic M."/>
            <person name="Strong C."/>
            <person name="Sun H."/>
            <person name="Lamar B."/>
            <person name="Yordan C."/>
            <person name="Ma P."/>
            <person name="Zhong J."/>
            <person name="Preston R."/>
            <person name="Vil D."/>
            <person name="Shekher M."/>
            <person name="Matero A."/>
            <person name="Shah R."/>
            <person name="Swaby I.K."/>
            <person name="O'Shaughnessy A."/>
            <person name="Rodriguez M."/>
            <person name="Hoffman J."/>
            <person name="Till S."/>
            <person name="Granat S."/>
            <person name="Shohdy N."/>
            <person name="Hasegawa A."/>
            <person name="Hameed A."/>
            <person name="Lodhi M."/>
            <person name="Johnson A."/>
            <person name="Chen E."/>
            <person name="Marra M.A."/>
            <person name="Martienssen R."/>
            <person name="McCombie W.R."/>
        </authorList>
    </citation>
    <scope>NUCLEOTIDE SEQUENCE [LARGE SCALE GENOMIC DNA]</scope>
    <source>
        <strain>cv. Columbia</strain>
    </source>
</reference>
<reference key="4">
    <citation type="journal article" date="2017" name="Plant J.">
        <title>Araport11: a complete reannotation of the Arabidopsis thaliana reference genome.</title>
        <authorList>
            <person name="Cheng C.Y."/>
            <person name="Krishnakumar V."/>
            <person name="Chan A.P."/>
            <person name="Thibaud-Nissen F."/>
            <person name="Schobel S."/>
            <person name="Town C.D."/>
        </authorList>
    </citation>
    <scope>GENOME REANNOTATION</scope>
    <source>
        <strain>cv. Columbia</strain>
    </source>
</reference>
<reference key="5">
    <citation type="journal article" date="2003" name="Science">
        <title>Empirical analysis of transcriptional activity in the Arabidopsis genome.</title>
        <authorList>
            <person name="Yamada K."/>
            <person name="Lim J."/>
            <person name="Dale J.M."/>
            <person name="Chen H."/>
            <person name="Shinn P."/>
            <person name="Palm C.J."/>
            <person name="Southwick A.M."/>
            <person name="Wu H.C."/>
            <person name="Kim C.J."/>
            <person name="Nguyen M."/>
            <person name="Pham P.K."/>
            <person name="Cheuk R.F."/>
            <person name="Karlin-Newmann G."/>
            <person name="Liu S.X."/>
            <person name="Lam B."/>
            <person name="Sakano H."/>
            <person name="Wu T."/>
            <person name="Yu G."/>
            <person name="Miranda M."/>
            <person name="Quach H.L."/>
            <person name="Tripp M."/>
            <person name="Chang C.H."/>
            <person name="Lee J.M."/>
            <person name="Toriumi M.J."/>
            <person name="Chan M.M."/>
            <person name="Tang C.C."/>
            <person name="Onodera C.S."/>
            <person name="Deng J.M."/>
            <person name="Akiyama K."/>
            <person name="Ansari Y."/>
            <person name="Arakawa T."/>
            <person name="Banh J."/>
            <person name="Banno F."/>
            <person name="Bowser L."/>
            <person name="Brooks S.Y."/>
            <person name="Carninci P."/>
            <person name="Chao Q."/>
            <person name="Choy N."/>
            <person name="Enju A."/>
            <person name="Goldsmith A.D."/>
            <person name="Gurjal M."/>
            <person name="Hansen N.F."/>
            <person name="Hayashizaki Y."/>
            <person name="Johnson-Hopson C."/>
            <person name="Hsuan V.W."/>
            <person name="Iida K."/>
            <person name="Karnes M."/>
            <person name="Khan S."/>
            <person name="Koesema E."/>
            <person name="Ishida J."/>
            <person name="Jiang P.X."/>
            <person name="Jones T."/>
            <person name="Kawai J."/>
            <person name="Kamiya A."/>
            <person name="Meyers C."/>
            <person name="Nakajima M."/>
            <person name="Narusaka M."/>
            <person name="Seki M."/>
            <person name="Sakurai T."/>
            <person name="Satou M."/>
            <person name="Tamse R."/>
            <person name="Vaysberg M."/>
            <person name="Wallender E.K."/>
            <person name="Wong C."/>
            <person name="Yamamura Y."/>
            <person name="Yuan S."/>
            <person name="Shinozaki K."/>
            <person name="Davis R.W."/>
            <person name="Theologis A."/>
            <person name="Ecker J.R."/>
        </authorList>
    </citation>
    <scope>NUCLEOTIDE SEQUENCE [LARGE SCALE MRNA]</scope>
    <source>
        <strain>cv. Columbia</strain>
    </source>
</reference>
<reference key="6">
    <citation type="submission" date="2004-12" db="EMBL/GenBank/DDBJ databases">
        <title>Arabidopsis ORF clones.</title>
        <authorList>
            <person name="Shinn P."/>
            <person name="Chen H."/>
            <person name="Cheuk R."/>
            <person name="Kim C.J."/>
            <person name="Ecker J.R."/>
        </authorList>
    </citation>
    <scope>NUCLEOTIDE SEQUENCE [LARGE SCALE MRNA]</scope>
    <source>
        <strain>cv. Columbia</strain>
    </source>
</reference>
<reference key="7">
    <citation type="submission" date="2002-03" db="EMBL/GenBank/DDBJ databases">
        <title>Full-length cDNA from Arabidopsis thaliana.</title>
        <authorList>
            <person name="Brover V.V."/>
            <person name="Troukhan M.E."/>
            <person name="Alexandrov N.A."/>
            <person name="Lu Y.-P."/>
            <person name="Flavell R.B."/>
            <person name="Feldmann K.A."/>
        </authorList>
    </citation>
    <scope>NUCLEOTIDE SEQUENCE [LARGE SCALE MRNA]</scope>
</reference>
<reference key="8">
    <citation type="journal article" date="2001" name="Plant Cell Physiol.">
        <title>A comprehensive expression analysis of all members of a gene family encoding cell-wall enzymes allowed us to predict cis-regulatory regions involved in cell-wall construction in specific organs of Arabidopsis.</title>
        <authorList>
            <person name="Yokoyama R."/>
            <person name="Nishitani K."/>
        </authorList>
    </citation>
    <scope>INDUCTION</scope>
</reference>
<reference key="9">
    <citation type="journal article" date="2002" name="Plant Cell Physiol.">
        <title>The XTH family of enzymes involved in xyloglucan endotransglucosylation and endohydrolysis: current perspectives and a new unifying nomenclature.</title>
        <authorList>
            <person name="Rose J.K.C."/>
            <person name="Braam J."/>
            <person name="Fry S.C."/>
            <person name="Nishitani K."/>
        </authorList>
    </citation>
    <scope>NOMENCLATURE</scope>
</reference>
<reference key="10">
    <citation type="journal article" date="2003" name="Plant Physiol.">
        <title>LAF3, a novel factor required for normal phytochrome A signaling.</title>
        <authorList>
            <person name="Hare P.D."/>
            <person name="Moller S.G."/>
            <person name="Huang L.-F."/>
            <person name="Chua N.-H."/>
        </authorList>
    </citation>
    <scope>REGULATION BY FAR-RED LIGHT</scope>
    <source>
        <strain>cv. Landsberg erecta</strain>
    </source>
</reference>
<reference key="11">
    <citation type="journal article" date="2006" name="Plant Mol. Biol.">
        <title>Developmental expression patterns of Arabidopsis XTH genes reported by transgenes and Genevestigator.</title>
        <authorList>
            <person name="Becnel J."/>
            <person name="Natarajan M."/>
            <person name="Kipp A."/>
            <person name="Braam J."/>
        </authorList>
    </citation>
    <scope>TISSUE SPECIFICITY</scope>
</reference>
<reference key="12">
    <citation type="journal article" date="2011" name="Plant Physiol.">
        <title>Cell wall hemicellulose contributes significantly to aluminum adsorption and root growth in Arabidopsis.</title>
        <authorList>
            <person name="Yang J.L."/>
            <person name="Zhu X.F."/>
            <person name="Peng Y.X."/>
            <person name="Zheng C."/>
            <person name="Li G.X."/>
            <person name="Liu Y."/>
            <person name="Shi Y.Z."/>
            <person name="Zheng S.J."/>
        </authorList>
    </citation>
    <scope>INDUCTION BY ALUMINUM</scope>
</reference>
<reference key="13">
    <citation type="journal article" date="2013" name="Plant Physiol.">
        <title>Coordination between apoplastic and symplastic detoxification confers plant aluminum resistance.</title>
        <authorList>
            <person name="Zhu X.F."/>
            <person name="Lei G.J."/>
            <person name="Wang Z.W."/>
            <person name="Shi Y.Z."/>
            <person name="Braam J."/>
            <person name="Li G.X."/>
            <person name="Zheng S.J."/>
        </authorList>
    </citation>
    <scope>DISRUPTION PHENOTYPE</scope>
</reference>
<reference key="14">
    <citation type="journal article" date="2015" name="Phytochemistry">
        <title>Distinct catalytic capacities of two aluminium-repressed Arabidopsis thaliana xyloglucan endotransglucosylase/hydrolases, XTH15 and XTH31, heterologously produced in Pichia.</title>
        <authorList>
            <person name="Shi Y.Z."/>
            <person name="Zhu X.F."/>
            <person name="Miller J.G."/>
            <person name="Gregson T."/>
            <person name="Zheng S.J."/>
            <person name="Fry S.C."/>
        </authorList>
    </citation>
    <scope>FUNCTION</scope>
    <scope>CATALYTIC ACTIVITY</scope>
    <scope>BIOPHYSICOCHEMICAL PROPERTIES</scope>
</reference>
<name>XTH15_ARATH</name>
<protein>
    <recommendedName>
        <fullName evidence="12">Xyloglucan endotransglucosylase/hydrolase protein 15</fullName>
        <shortName evidence="12">At-XTH15</shortName>
        <shortName evidence="12">XTH-15</shortName>
        <ecNumber evidence="11">2.4.1.207</ecNumber>
        <ecNumber evidence="11">3.2.1.151</ecNumber>
    </recommendedName>
</protein>
<organism>
    <name type="scientific">Arabidopsis thaliana</name>
    <name type="common">Mouse-ear cress</name>
    <dbReference type="NCBI Taxonomy" id="3702"/>
    <lineage>
        <taxon>Eukaryota</taxon>
        <taxon>Viridiplantae</taxon>
        <taxon>Streptophyta</taxon>
        <taxon>Embryophyta</taxon>
        <taxon>Tracheophyta</taxon>
        <taxon>Spermatophyta</taxon>
        <taxon>Magnoliopsida</taxon>
        <taxon>eudicotyledons</taxon>
        <taxon>Gunneridae</taxon>
        <taxon>Pentapetalae</taxon>
        <taxon>rosids</taxon>
        <taxon>malvids</taxon>
        <taxon>Brassicales</taxon>
        <taxon>Brassicaceae</taxon>
        <taxon>Camelineae</taxon>
        <taxon>Arabidopsis</taxon>
    </lineage>
</organism>
<gene>
    <name evidence="12" type="primary">XTH15</name>
    <name evidence="13" type="synonym">XTR7</name>
    <name evidence="15" type="ordered locus">At4g14130</name>
    <name evidence="16" type="ORF">dl3105c</name>
    <name evidence="17" type="ORF">FCAALL.173</name>
</gene>
<comment type="function">
    <text evidence="11">Catalyzes xyloglucan endohydrolysis (XEH) and/or endotransglycosylation (XET). Cleaves and religates xyloglucan polymers, an essential constituent of the primary cell wall, and thereby participates in cell wall construction of growing tissues. Has a high XET activity, but little or no XEH activity in vitro. Acceptor preferences are XXXGol &gt; XLLGol = XLFGol &gt; XXLGol &gt; XXFGol.</text>
</comment>
<comment type="catalytic activity">
    <reaction evidence="11">
        <text>breaks a beta-(1-&gt;4) bond in the backbone of a xyloglucan and transfers the xyloglucanyl segment on to O-4 of the non-reducing terminal glucose residue of an acceptor, which can be a xyloglucan or an oligosaccharide of xyloglucan.</text>
        <dbReference type="EC" id="2.4.1.207"/>
    </reaction>
</comment>
<comment type="catalytic activity">
    <reaction evidence="11">
        <text>xyloglucan + H2O = xyloglucan oligosaccharides.</text>
        <dbReference type="EC" id="3.2.1.151"/>
    </reaction>
</comment>
<comment type="biophysicochemical properties">
    <kinetics>
        <KM evidence="11">31 uM for XXXGol</KM>
        <text evidence="11">KM for xyloglucan as donor substrate is 2.87 mg/ml. KM is quoted in mg/ml, not uM, because XTHs are able to utilise any segment of the polysaccharide chain equally well, not just one site per molecule as with the acceptor.</text>
    </kinetics>
    <phDependence>
        <text evidence="11">Optimum pH is 6 for the XET activity.</text>
    </phDependence>
</comment>
<comment type="subcellular location">
    <subcellularLocation>
        <location evidence="14">Secreted</location>
        <location evidence="14">Cell wall</location>
    </subcellularLocation>
    <subcellularLocation>
        <location evidence="14">Secreted</location>
        <location evidence="14">Extracellular space</location>
        <location evidence="14">Apoplast</location>
    </subcellularLocation>
</comment>
<comment type="tissue specificity">
    <text evidence="8">Strongly expressed in roots, hypocotyls and cotyledons. Aslo detected in inflorescence stems and in the carpels and styles in flowers.</text>
</comment>
<comment type="induction">
    <text evidence="6 7 9">Down-regulated by auxin (PubMed:11673616). Down-regulated by aluminum (PubMed:21285327). Repressed by far-red light (FRc) (PubMed:14645728).</text>
</comment>
<comment type="PTM">
    <text evidence="1">Contains at least one intrachain disulfide bond essential for its enzymatic activity.</text>
</comment>
<comment type="disruption phenotype">
    <text evidence="10">No visible growth defects, but increased aluminum resistance.</text>
</comment>
<comment type="similarity">
    <text evidence="14">Belongs to the glycosyl hydrolase 16 family. XTH group 2 subfamily.</text>
</comment>
<sequence length="289" mass="32687">MGPSSSLTTIVATVLLVTLFGSAYASNFFDEFDLTWGDHRGKIFNGGNMLSLSLDQVSGSGFKSKKEYLFGRIDMQLKLVAGNSAGTVTAYYLSSQGATHDEIDFEFLGNETGKPYVLHTNVFAQGKGDREQQFYLWFDPTKNFHTYSIVWRPQHIIFLVDNLPIRVFNNAEKLGVPFPKSQPMRIYSSLWNADDWATRGGLVKTDWSKAPFTAYYRGFNAAACTASSGCDPKFKSSFGDGKLQVATELNAYGRRRLRWVQKYFMIYNYCSDLKRFPRGFPPECKKSRV</sequence>
<feature type="signal peptide" evidence="3">
    <location>
        <begin position="1"/>
        <end position="25"/>
    </location>
</feature>
<feature type="chain" id="PRO_0000011815" description="Xyloglucan endotransglucosylase/hydrolase protein 15">
    <location>
        <begin position="26"/>
        <end position="289"/>
    </location>
</feature>
<feature type="domain" description="GH16" evidence="4">
    <location>
        <begin position="26"/>
        <end position="216"/>
    </location>
</feature>
<feature type="active site" description="Nucleophile" evidence="5">
    <location>
        <position position="102"/>
    </location>
</feature>
<feature type="active site" description="Proton donor" evidence="5">
    <location>
        <position position="106"/>
    </location>
</feature>
<feature type="binding site" evidence="2">
    <location>
        <position position="106"/>
    </location>
    <ligand>
        <name>xyloglucan</name>
        <dbReference type="ChEBI" id="CHEBI:18233"/>
    </ligand>
</feature>
<feature type="binding site" evidence="2">
    <location>
        <begin position="119"/>
        <end position="121"/>
    </location>
    <ligand>
        <name>xyloglucan</name>
        <dbReference type="ChEBI" id="CHEBI:18233"/>
    </ligand>
</feature>
<feature type="binding site" evidence="2">
    <location>
        <begin position="129"/>
        <end position="131"/>
    </location>
    <ligand>
        <name>xyloglucan</name>
        <dbReference type="ChEBI" id="CHEBI:18233"/>
    </ligand>
</feature>
<feature type="binding site" evidence="2">
    <location>
        <begin position="195"/>
        <end position="196"/>
    </location>
    <ligand>
        <name>xyloglucan</name>
        <dbReference type="ChEBI" id="CHEBI:18233"/>
    </ligand>
</feature>
<feature type="binding site" evidence="2">
    <location>
        <position position="200"/>
    </location>
    <ligand>
        <name>xyloglucan</name>
        <dbReference type="ChEBI" id="CHEBI:18233"/>
    </ligand>
</feature>
<feature type="binding site" evidence="2">
    <location>
        <position position="275"/>
    </location>
    <ligand>
        <name>xyloglucan</name>
        <dbReference type="ChEBI" id="CHEBI:18233"/>
    </ligand>
</feature>
<feature type="site" description="Important for catalytic activity" evidence="2">
    <location>
        <position position="104"/>
    </location>
</feature>
<feature type="glycosylation site" description="N-linked (GlcNAc...) asparagine" evidence="3">
    <location>
        <position position="110"/>
    </location>
</feature>
<feature type="disulfide bond" evidence="2">
    <location>
        <begin position="224"/>
        <end position="230"/>
    </location>
</feature>
<feature type="disulfide bond" evidence="2">
    <location>
        <begin position="270"/>
        <end position="284"/>
    </location>
</feature>
<feature type="sequence conflict" description="In Ref. 2; CAB10192 and 3; CAB78455." evidence="14" ref="2 3">
    <original>F</original>
    <variation>V</variation>
    <location>
        <position position="70"/>
    </location>
</feature>
<accession>Q38911</accession>
<accession>O23272</accession>
<accession>Q5M726</accession>
<proteinExistence type="evidence at protein level"/>
<dbReference type="EC" id="2.4.1.207" evidence="11"/>
<dbReference type="EC" id="3.2.1.151" evidence="11"/>
<dbReference type="EMBL" id="U43489">
    <property type="protein sequence ID" value="AAB18368.1"/>
    <property type="molecule type" value="mRNA"/>
</dbReference>
<dbReference type="EMBL" id="Z97335">
    <property type="protein sequence ID" value="CAB10192.1"/>
    <property type="molecule type" value="Genomic_DNA"/>
</dbReference>
<dbReference type="EMBL" id="AL161538">
    <property type="protein sequence ID" value="CAB78455.1"/>
    <property type="molecule type" value="Genomic_DNA"/>
</dbReference>
<dbReference type="EMBL" id="CP002687">
    <property type="protein sequence ID" value="AEE83378.1"/>
    <property type="molecule type" value="Genomic_DNA"/>
</dbReference>
<dbReference type="EMBL" id="AY045865">
    <property type="protein sequence ID" value="AAK76539.1"/>
    <property type="molecule type" value="mRNA"/>
</dbReference>
<dbReference type="EMBL" id="BT020422">
    <property type="protein sequence ID" value="AAW28549.1"/>
    <property type="molecule type" value="mRNA"/>
</dbReference>
<dbReference type="EMBL" id="AY087282">
    <property type="protein sequence ID" value="AAM64835.1"/>
    <property type="molecule type" value="mRNA"/>
</dbReference>
<dbReference type="PIR" id="F71402">
    <property type="entry name" value="F71402"/>
</dbReference>
<dbReference type="RefSeq" id="NP_193149.2">
    <property type="nucleotide sequence ID" value="NM_117490.4"/>
</dbReference>
<dbReference type="SMR" id="Q38911"/>
<dbReference type="BioGRID" id="12348">
    <property type="interactions" value="1"/>
</dbReference>
<dbReference type="FunCoup" id="Q38911">
    <property type="interactions" value="70"/>
</dbReference>
<dbReference type="IntAct" id="Q38911">
    <property type="interactions" value="1"/>
</dbReference>
<dbReference type="STRING" id="3702.Q38911"/>
<dbReference type="CAZy" id="GH16">
    <property type="family name" value="Glycoside Hydrolase Family 16"/>
</dbReference>
<dbReference type="GlyCosmos" id="Q38911">
    <property type="glycosylation" value="1 site, No reported glycans"/>
</dbReference>
<dbReference type="GlyGen" id="Q38911">
    <property type="glycosylation" value="1 site"/>
</dbReference>
<dbReference type="PaxDb" id="3702-AT4G14130.1"/>
<dbReference type="ProteomicsDB" id="242515"/>
<dbReference type="EnsemblPlants" id="AT4G14130.1">
    <property type="protein sequence ID" value="AT4G14130.1"/>
    <property type="gene ID" value="AT4G14130"/>
</dbReference>
<dbReference type="GeneID" id="827051"/>
<dbReference type="Gramene" id="AT4G14130.1">
    <property type="protein sequence ID" value="AT4G14130.1"/>
    <property type="gene ID" value="AT4G14130"/>
</dbReference>
<dbReference type="KEGG" id="ath:AT4G14130"/>
<dbReference type="Araport" id="AT4G14130"/>
<dbReference type="TAIR" id="AT4G14130">
    <property type="gene designation" value="XTH15"/>
</dbReference>
<dbReference type="eggNOG" id="ENOG502QQ71">
    <property type="taxonomic scope" value="Eukaryota"/>
</dbReference>
<dbReference type="HOGENOM" id="CLU_048041_0_0_1"/>
<dbReference type="InParanoid" id="Q38911"/>
<dbReference type="OMA" id="EWHTNAL"/>
<dbReference type="OrthoDB" id="4781at2759"/>
<dbReference type="PhylomeDB" id="Q38911"/>
<dbReference type="BioCyc" id="ARA:AT4G14130-MONOMER"/>
<dbReference type="BRENDA" id="2.4.1.207">
    <property type="organism ID" value="399"/>
</dbReference>
<dbReference type="BRENDA" id="3.2.1.151">
    <property type="organism ID" value="399"/>
</dbReference>
<dbReference type="SABIO-RK" id="Q38911"/>
<dbReference type="PRO" id="PR:Q38911"/>
<dbReference type="Proteomes" id="UP000006548">
    <property type="component" value="Chromosome 4"/>
</dbReference>
<dbReference type="ExpressionAtlas" id="Q38911">
    <property type="expression patterns" value="baseline and differential"/>
</dbReference>
<dbReference type="GO" id="GO:0048046">
    <property type="term" value="C:apoplast"/>
    <property type="evidence" value="ECO:0007669"/>
    <property type="project" value="UniProtKB-SubCell"/>
</dbReference>
<dbReference type="GO" id="GO:0030247">
    <property type="term" value="F:polysaccharide binding"/>
    <property type="evidence" value="ECO:0000250"/>
    <property type="project" value="UniProtKB"/>
</dbReference>
<dbReference type="GO" id="GO:0033946">
    <property type="term" value="F:xyloglucan-specific endo-beta-1,4-glucanase activity"/>
    <property type="evidence" value="ECO:0007669"/>
    <property type="project" value="UniProtKB-EC"/>
</dbReference>
<dbReference type="GO" id="GO:0016762">
    <property type="term" value="F:xyloglucan:xyloglucosyl transferase activity"/>
    <property type="evidence" value="ECO:0007669"/>
    <property type="project" value="UniProtKB-EC"/>
</dbReference>
<dbReference type="GO" id="GO:0042546">
    <property type="term" value="P:cell wall biogenesis"/>
    <property type="evidence" value="ECO:0007669"/>
    <property type="project" value="InterPro"/>
</dbReference>
<dbReference type="GO" id="GO:0071555">
    <property type="term" value="P:cell wall organization"/>
    <property type="evidence" value="ECO:0007669"/>
    <property type="project" value="UniProtKB-KW"/>
</dbReference>
<dbReference type="GO" id="GO:0010218">
    <property type="term" value="P:response to far red light"/>
    <property type="evidence" value="ECO:0000270"/>
    <property type="project" value="UniProtKB"/>
</dbReference>
<dbReference type="GO" id="GO:0010411">
    <property type="term" value="P:xyloglucan metabolic process"/>
    <property type="evidence" value="ECO:0007669"/>
    <property type="project" value="InterPro"/>
</dbReference>
<dbReference type="CDD" id="cd02176">
    <property type="entry name" value="GH16_XET"/>
    <property type="match status" value="1"/>
</dbReference>
<dbReference type="FunFam" id="2.60.120.200:FF:000025">
    <property type="entry name" value="Xyloglucan endotransglucosylase/hydrolase"/>
    <property type="match status" value="1"/>
</dbReference>
<dbReference type="Gene3D" id="2.60.120.200">
    <property type="match status" value="1"/>
</dbReference>
<dbReference type="InterPro" id="IPR044791">
    <property type="entry name" value="Beta-glucanase/XTH"/>
</dbReference>
<dbReference type="InterPro" id="IPR013320">
    <property type="entry name" value="ConA-like_dom_sf"/>
</dbReference>
<dbReference type="InterPro" id="IPR000757">
    <property type="entry name" value="GH16"/>
</dbReference>
<dbReference type="InterPro" id="IPR008263">
    <property type="entry name" value="GH16_AS"/>
</dbReference>
<dbReference type="InterPro" id="IPR010713">
    <property type="entry name" value="XET_C"/>
</dbReference>
<dbReference type="InterPro" id="IPR016455">
    <property type="entry name" value="XTH"/>
</dbReference>
<dbReference type="PANTHER" id="PTHR31062">
    <property type="entry name" value="XYLOGLUCAN ENDOTRANSGLUCOSYLASE/HYDROLASE PROTEIN 8-RELATED"/>
    <property type="match status" value="1"/>
</dbReference>
<dbReference type="Pfam" id="PF00722">
    <property type="entry name" value="Glyco_hydro_16"/>
    <property type="match status" value="1"/>
</dbReference>
<dbReference type="Pfam" id="PF06955">
    <property type="entry name" value="XET_C"/>
    <property type="match status" value="1"/>
</dbReference>
<dbReference type="PIRSF" id="PIRSF005604">
    <property type="entry name" value="XET"/>
    <property type="match status" value="1"/>
</dbReference>
<dbReference type="SUPFAM" id="SSF49899">
    <property type="entry name" value="Concanavalin A-like lectins/glucanases"/>
    <property type="match status" value="1"/>
</dbReference>
<dbReference type="PROSITE" id="PS01034">
    <property type="entry name" value="GH16_1"/>
    <property type="match status" value="1"/>
</dbReference>
<dbReference type="PROSITE" id="PS51762">
    <property type="entry name" value="GH16_2"/>
    <property type="match status" value="1"/>
</dbReference>
<evidence type="ECO:0000250" key="1"/>
<evidence type="ECO:0000250" key="2">
    <source>
        <dbReference type="UniProtKB" id="Q8GZD5"/>
    </source>
</evidence>
<evidence type="ECO:0000255" key="3"/>
<evidence type="ECO:0000255" key="4">
    <source>
        <dbReference type="PROSITE-ProRule" id="PRU01098"/>
    </source>
</evidence>
<evidence type="ECO:0000255" key="5">
    <source>
        <dbReference type="PROSITE-ProRule" id="PRU10064"/>
    </source>
</evidence>
<evidence type="ECO:0000269" key="6">
    <source>
    </source>
</evidence>
<evidence type="ECO:0000269" key="7">
    <source>
    </source>
</evidence>
<evidence type="ECO:0000269" key="8">
    <source>
    </source>
</evidence>
<evidence type="ECO:0000269" key="9">
    <source>
    </source>
</evidence>
<evidence type="ECO:0000269" key="10">
    <source>
    </source>
</evidence>
<evidence type="ECO:0000269" key="11">
    <source>
    </source>
</evidence>
<evidence type="ECO:0000303" key="12">
    <source>
    </source>
</evidence>
<evidence type="ECO:0000303" key="13">
    <source>
    </source>
</evidence>
<evidence type="ECO:0000305" key="14"/>
<evidence type="ECO:0000312" key="15">
    <source>
        <dbReference type="Araport" id="AT4G14130"/>
    </source>
</evidence>
<evidence type="ECO:0000312" key="16">
    <source>
        <dbReference type="EMBL" id="CAB10192.1"/>
    </source>
</evidence>
<evidence type="ECO:0000312" key="17">
    <source>
        <dbReference type="EMBL" id="CAB78455.1"/>
    </source>
</evidence>
<keyword id="KW-0052">Apoplast</keyword>
<keyword id="KW-0134">Cell wall</keyword>
<keyword id="KW-0961">Cell wall biogenesis/degradation</keyword>
<keyword id="KW-1015">Disulfide bond</keyword>
<keyword id="KW-0325">Glycoprotein</keyword>
<keyword id="KW-0326">Glycosidase</keyword>
<keyword id="KW-0378">Hydrolase</keyword>
<keyword id="KW-1185">Reference proteome</keyword>
<keyword id="KW-0964">Secreted</keyword>
<keyword id="KW-0732">Signal</keyword>
<keyword id="KW-0808">Transferase</keyword>